<sequence length="257" mass="28675">MNKKILNFIKKKNKTKIISLTAYSKNIASIIDRHCDLVLVGDSLGSVLYSFSSTKKVTLDMMIEHSKSVRMGVKKSLMVVDMPHNTYRNSKEALSNAKKIISKTKCDAIKLEGGKKVIQIIKTLIKNKIPVMGHLGVLPQSATNFKFKGKEIAERKIILRDSKLLEDAGVFSIVLECVESSLAKEITKTVKVPTIGIGASVHCDGQVLVTDDLIGLNKIKARFVKRYSNIEKQINDAALKFKKDVIRSKFPTKKHSY</sequence>
<proteinExistence type="inferred from homology"/>
<reference key="1">
    <citation type="journal article" date="2005" name="Science">
        <title>Genome streamlining in a cosmopolitan oceanic bacterium.</title>
        <authorList>
            <person name="Giovannoni S.J."/>
            <person name="Tripp H.J."/>
            <person name="Givan S."/>
            <person name="Podar M."/>
            <person name="Vergin K.L."/>
            <person name="Baptista D."/>
            <person name="Bibbs L."/>
            <person name="Eads J."/>
            <person name="Richardson T.H."/>
            <person name="Noordewier M."/>
            <person name="Rappe M.S."/>
            <person name="Short J.M."/>
            <person name="Carrington J.C."/>
            <person name="Mathur E.J."/>
        </authorList>
    </citation>
    <scope>NUCLEOTIDE SEQUENCE [LARGE SCALE GENOMIC DNA]</scope>
    <source>
        <strain>HTCC1062</strain>
    </source>
</reference>
<gene>
    <name evidence="1" type="primary">panB</name>
    <name type="ordered locus">SAR11_0653</name>
</gene>
<evidence type="ECO:0000255" key="1">
    <source>
        <dbReference type="HAMAP-Rule" id="MF_00156"/>
    </source>
</evidence>
<dbReference type="EC" id="2.1.2.11" evidence="1"/>
<dbReference type="EMBL" id="CP000084">
    <property type="protein sequence ID" value="AAZ21473.1"/>
    <property type="molecule type" value="Genomic_DNA"/>
</dbReference>
<dbReference type="RefSeq" id="WP_011281840.1">
    <property type="nucleotide sequence ID" value="NC_007205.1"/>
</dbReference>
<dbReference type="SMR" id="Q4FMW6"/>
<dbReference type="STRING" id="335992.SAR11_0653"/>
<dbReference type="GeneID" id="66295157"/>
<dbReference type="KEGG" id="pub:SAR11_0653"/>
<dbReference type="eggNOG" id="COG0413">
    <property type="taxonomic scope" value="Bacteria"/>
</dbReference>
<dbReference type="HOGENOM" id="CLU_036645_1_0_5"/>
<dbReference type="OrthoDB" id="9781789at2"/>
<dbReference type="UniPathway" id="UPA00028">
    <property type="reaction ID" value="UER00003"/>
</dbReference>
<dbReference type="Proteomes" id="UP000002528">
    <property type="component" value="Chromosome"/>
</dbReference>
<dbReference type="GO" id="GO:0005737">
    <property type="term" value="C:cytoplasm"/>
    <property type="evidence" value="ECO:0007669"/>
    <property type="project" value="UniProtKB-SubCell"/>
</dbReference>
<dbReference type="GO" id="GO:0003864">
    <property type="term" value="F:3-methyl-2-oxobutanoate hydroxymethyltransferase activity"/>
    <property type="evidence" value="ECO:0007669"/>
    <property type="project" value="UniProtKB-UniRule"/>
</dbReference>
<dbReference type="GO" id="GO:0000287">
    <property type="term" value="F:magnesium ion binding"/>
    <property type="evidence" value="ECO:0007669"/>
    <property type="project" value="TreeGrafter"/>
</dbReference>
<dbReference type="GO" id="GO:0015940">
    <property type="term" value="P:pantothenate biosynthetic process"/>
    <property type="evidence" value="ECO:0007669"/>
    <property type="project" value="UniProtKB-UniRule"/>
</dbReference>
<dbReference type="CDD" id="cd06557">
    <property type="entry name" value="KPHMT-like"/>
    <property type="match status" value="1"/>
</dbReference>
<dbReference type="Gene3D" id="3.20.20.60">
    <property type="entry name" value="Phosphoenolpyruvate-binding domains"/>
    <property type="match status" value="1"/>
</dbReference>
<dbReference type="HAMAP" id="MF_00156">
    <property type="entry name" value="PanB"/>
    <property type="match status" value="1"/>
</dbReference>
<dbReference type="InterPro" id="IPR003700">
    <property type="entry name" value="Pantoate_hydroxy_MeTrfase"/>
</dbReference>
<dbReference type="InterPro" id="IPR015813">
    <property type="entry name" value="Pyrv/PenolPyrv_kinase-like_dom"/>
</dbReference>
<dbReference type="InterPro" id="IPR040442">
    <property type="entry name" value="Pyrv_kinase-like_dom_sf"/>
</dbReference>
<dbReference type="NCBIfam" id="TIGR00222">
    <property type="entry name" value="panB"/>
    <property type="match status" value="1"/>
</dbReference>
<dbReference type="NCBIfam" id="NF001452">
    <property type="entry name" value="PRK00311.1"/>
    <property type="match status" value="1"/>
</dbReference>
<dbReference type="PANTHER" id="PTHR20881">
    <property type="entry name" value="3-METHYL-2-OXOBUTANOATE HYDROXYMETHYLTRANSFERASE"/>
    <property type="match status" value="1"/>
</dbReference>
<dbReference type="PANTHER" id="PTHR20881:SF0">
    <property type="entry name" value="3-METHYL-2-OXOBUTANOATE HYDROXYMETHYLTRANSFERASE"/>
    <property type="match status" value="1"/>
</dbReference>
<dbReference type="Pfam" id="PF02548">
    <property type="entry name" value="Pantoate_transf"/>
    <property type="match status" value="1"/>
</dbReference>
<dbReference type="PIRSF" id="PIRSF000388">
    <property type="entry name" value="Pantoate_hydroxy_MeTrfase"/>
    <property type="match status" value="1"/>
</dbReference>
<dbReference type="SUPFAM" id="SSF51621">
    <property type="entry name" value="Phosphoenolpyruvate/pyruvate domain"/>
    <property type="match status" value="1"/>
</dbReference>
<protein>
    <recommendedName>
        <fullName evidence="1">3-methyl-2-oxobutanoate hydroxymethyltransferase</fullName>
        <ecNumber evidence="1">2.1.2.11</ecNumber>
    </recommendedName>
    <alternativeName>
        <fullName evidence="1">Ketopantoate hydroxymethyltransferase</fullName>
        <shortName evidence="1">KPHMT</shortName>
    </alternativeName>
</protein>
<organism>
    <name type="scientific">Pelagibacter ubique (strain HTCC1062)</name>
    <dbReference type="NCBI Taxonomy" id="335992"/>
    <lineage>
        <taxon>Bacteria</taxon>
        <taxon>Pseudomonadati</taxon>
        <taxon>Pseudomonadota</taxon>
        <taxon>Alphaproteobacteria</taxon>
        <taxon>Candidatus Pelagibacterales</taxon>
        <taxon>Candidatus Pelagibacteraceae</taxon>
        <taxon>Candidatus Pelagibacter</taxon>
    </lineage>
</organism>
<keyword id="KW-0963">Cytoplasm</keyword>
<keyword id="KW-0460">Magnesium</keyword>
<keyword id="KW-0479">Metal-binding</keyword>
<keyword id="KW-0566">Pantothenate biosynthesis</keyword>
<keyword id="KW-1185">Reference proteome</keyword>
<keyword id="KW-0808">Transferase</keyword>
<accession>Q4FMW6</accession>
<comment type="function">
    <text evidence="1">Catalyzes the reversible reaction in which hydroxymethyl group from 5,10-methylenetetrahydrofolate is transferred onto alpha-ketoisovalerate to form ketopantoate.</text>
</comment>
<comment type="catalytic activity">
    <reaction evidence="1">
        <text>3-methyl-2-oxobutanoate + (6R)-5,10-methylene-5,6,7,8-tetrahydrofolate + H2O = 2-dehydropantoate + (6S)-5,6,7,8-tetrahydrofolate</text>
        <dbReference type="Rhea" id="RHEA:11824"/>
        <dbReference type="ChEBI" id="CHEBI:11561"/>
        <dbReference type="ChEBI" id="CHEBI:11851"/>
        <dbReference type="ChEBI" id="CHEBI:15377"/>
        <dbReference type="ChEBI" id="CHEBI:15636"/>
        <dbReference type="ChEBI" id="CHEBI:57453"/>
        <dbReference type="EC" id="2.1.2.11"/>
    </reaction>
</comment>
<comment type="cofactor">
    <cofactor evidence="1">
        <name>Mg(2+)</name>
        <dbReference type="ChEBI" id="CHEBI:18420"/>
    </cofactor>
    <text evidence="1">Binds 1 Mg(2+) ion per subunit.</text>
</comment>
<comment type="pathway">
    <text evidence="1">Cofactor biosynthesis; (R)-pantothenate biosynthesis; (R)-pantoate from 3-methyl-2-oxobutanoate: step 1/2.</text>
</comment>
<comment type="subunit">
    <text evidence="1">Homodecamer; pentamer of dimers.</text>
</comment>
<comment type="subcellular location">
    <subcellularLocation>
        <location evidence="1">Cytoplasm</location>
    </subcellularLocation>
</comment>
<comment type="similarity">
    <text evidence="1">Belongs to the PanB family.</text>
</comment>
<feature type="chain" id="PRO_0000297315" description="3-methyl-2-oxobutanoate hydroxymethyltransferase">
    <location>
        <begin position="1"/>
        <end position="257"/>
    </location>
</feature>
<feature type="active site" description="Proton acceptor" evidence="1">
    <location>
        <position position="176"/>
    </location>
</feature>
<feature type="binding site" evidence="1">
    <location>
        <begin position="42"/>
        <end position="43"/>
    </location>
    <ligand>
        <name>3-methyl-2-oxobutanoate</name>
        <dbReference type="ChEBI" id="CHEBI:11851"/>
    </ligand>
</feature>
<feature type="binding site" evidence="1">
    <location>
        <position position="42"/>
    </location>
    <ligand>
        <name>Mg(2+)</name>
        <dbReference type="ChEBI" id="CHEBI:18420"/>
    </ligand>
</feature>
<feature type="binding site" evidence="1">
    <location>
        <position position="81"/>
    </location>
    <ligand>
        <name>3-methyl-2-oxobutanoate</name>
        <dbReference type="ChEBI" id="CHEBI:11851"/>
    </ligand>
</feature>
<feature type="binding site" evidence="1">
    <location>
        <position position="81"/>
    </location>
    <ligand>
        <name>Mg(2+)</name>
        <dbReference type="ChEBI" id="CHEBI:18420"/>
    </ligand>
</feature>
<feature type="binding site" evidence="1">
    <location>
        <position position="110"/>
    </location>
    <ligand>
        <name>3-methyl-2-oxobutanoate</name>
        <dbReference type="ChEBI" id="CHEBI:11851"/>
    </ligand>
</feature>
<feature type="binding site" evidence="1">
    <location>
        <position position="112"/>
    </location>
    <ligand>
        <name>Mg(2+)</name>
        <dbReference type="ChEBI" id="CHEBI:18420"/>
    </ligand>
</feature>
<name>PANB_PELUB</name>